<dbReference type="EC" id="2.7.7.12" evidence="1"/>
<dbReference type="EMBL" id="AJ001072">
    <property type="protein sequence ID" value="CAA04515.1"/>
    <property type="molecule type" value="Genomic_DNA"/>
</dbReference>
<dbReference type="EMBL" id="AE000512">
    <property type="protein sequence ID" value="AAD36266.1"/>
    <property type="molecule type" value="Genomic_DNA"/>
</dbReference>
<dbReference type="PIR" id="D72283">
    <property type="entry name" value="D72283"/>
</dbReference>
<dbReference type="RefSeq" id="NP_228996.1">
    <property type="nucleotide sequence ID" value="NC_000853.1"/>
</dbReference>
<dbReference type="RefSeq" id="WP_004080138.1">
    <property type="nucleotide sequence ID" value="NC_000853.1"/>
</dbReference>
<dbReference type="SMR" id="O33836"/>
<dbReference type="STRING" id="243274.TM_1191"/>
<dbReference type="PaxDb" id="243274-THEMA_08375"/>
<dbReference type="EnsemblBacteria" id="AAD36266">
    <property type="protein sequence ID" value="AAD36266"/>
    <property type="gene ID" value="TM_1191"/>
</dbReference>
<dbReference type="KEGG" id="tma:TM1191"/>
<dbReference type="KEGG" id="tmi:THEMA_08375"/>
<dbReference type="KEGG" id="tmm:Tmari_1198"/>
<dbReference type="KEGG" id="tmw:THMA_1217"/>
<dbReference type="eggNOG" id="COG1085">
    <property type="taxonomic scope" value="Bacteria"/>
</dbReference>
<dbReference type="InParanoid" id="O33836"/>
<dbReference type="OrthoDB" id="9769064at2"/>
<dbReference type="BioCyc" id="MetaCyc:MONOMER-506"/>
<dbReference type="UniPathway" id="UPA00214"/>
<dbReference type="Proteomes" id="UP000008183">
    <property type="component" value="Chromosome"/>
</dbReference>
<dbReference type="GO" id="GO:0005737">
    <property type="term" value="C:cytoplasm"/>
    <property type="evidence" value="ECO:0000318"/>
    <property type="project" value="GO_Central"/>
</dbReference>
<dbReference type="GO" id="GO:0008108">
    <property type="term" value="F:UDP-glucose:hexose-1-phosphate uridylyltransferase activity"/>
    <property type="evidence" value="ECO:0000318"/>
    <property type="project" value="GO_Central"/>
</dbReference>
<dbReference type="GO" id="GO:0008270">
    <property type="term" value="F:zinc ion binding"/>
    <property type="evidence" value="ECO:0007669"/>
    <property type="project" value="InterPro"/>
</dbReference>
<dbReference type="GO" id="GO:0033499">
    <property type="term" value="P:galactose catabolic process via UDP-galactose, Leloir pathway"/>
    <property type="evidence" value="ECO:0000318"/>
    <property type="project" value="GO_Central"/>
</dbReference>
<dbReference type="CDD" id="cd00608">
    <property type="entry name" value="GalT"/>
    <property type="match status" value="1"/>
</dbReference>
<dbReference type="FunFam" id="3.30.428.10:FF:000010">
    <property type="entry name" value="Galactose-1-phosphate uridylyltransferase"/>
    <property type="match status" value="1"/>
</dbReference>
<dbReference type="FunFam" id="3.30.428.10:FF:000038">
    <property type="entry name" value="Galactose-1-phosphate uridylyltransferase"/>
    <property type="match status" value="1"/>
</dbReference>
<dbReference type="Gene3D" id="3.30.428.10">
    <property type="entry name" value="HIT-like"/>
    <property type="match status" value="2"/>
</dbReference>
<dbReference type="InterPro" id="IPR001937">
    <property type="entry name" value="GalP_UDPtransf1"/>
</dbReference>
<dbReference type="InterPro" id="IPR019779">
    <property type="entry name" value="GalP_UDPtransf1_His-AS"/>
</dbReference>
<dbReference type="InterPro" id="IPR005850">
    <property type="entry name" value="GalP_Utransf_C"/>
</dbReference>
<dbReference type="InterPro" id="IPR005849">
    <property type="entry name" value="GalP_Utransf_N"/>
</dbReference>
<dbReference type="InterPro" id="IPR036265">
    <property type="entry name" value="HIT-like_sf"/>
</dbReference>
<dbReference type="NCBIfam" id="TIGR00209">
    <property type="entry name" value="galT_1"/>
    <property type="match status" value="1"/>
</dbReference>
<dbReference type="PANTHER" id="PTHR11943">
    <property type="entry name" value="GALACTOSE-1-PHOSPHATE URIDYLYLTRANSFERASE"/>
    <property type="match status" value="1"/>
</dbReference>
<dbReference type="PANTHER" id="PTHR11943:SF1">
    <property type="entry name" value="GALACTOSE-1-PHOSPHATE URIDYLYLTRANSFERASE"/>
    <property type="match status" value="1"/>
</dbReference>
<dbReference type="Pfam" id="PF02744">
    <property type="entry name" value="GalP_UDP_tr_C"/>
    <property type="match status" value="1"/>
</dbReference>
<dbReference type="Pfam" id="PF01087">
    <property type="entry name" value="GalP_UDP_transf"/>
    <property type="match status" value="1"/>
</dbReference>
<dbReference type="PIRSF" id="PIRSF000808">
    <property type="entry name" value="GalT"/>
    <property type="match status" value="1"/>
</dbReference>
<dbReference type="SUPFAM" id="SSF54197">
    <property type="entry name" value="HIT-like"/>
    <property type="match status" value="2"/>
</dbReference>
<dbReference type="PROSITE" id="PS00117">
    <property type="entry name" value="GAL_P_UDP_TRANSF_I"/>
    <property type="match status" value="1"/>
</dbReference>
<protein>
    <recommendedName>
        <fullName>Galactose-1-phosphate uridylyltransferase</fullName>
        <shortName>Gal-1-P uridylyltransferase</shortName>
        <ecNumber evidence="1">2.7.7.12</ecNumber>
    </recommendedName>
    <alternativeName>
        <fullName>UDP-glucose--hexose-1-phosphate uridylyltransferase</fullName>
    </alternativeName>
</protein>
<accession>O33836</accession>
<name>GAL7_THEMA</name>
<sequence length="318" mass="37633">MMELRYNPLTDEWVIVSAATQKRPVQPSKTECPICVGGLELPEEYDLVTFENRYPSLKKDPPPVNWKEKGPFRKEESRGVCEVVVYTSDHNTALPGMPLKQIEKLVEMWVDRTRDLSQHDFVKYIFIFENRGKEVGASLPHPHGQIYAFPFLPKRIEVKIGAMRKWYEEKRKCPICEVLESEGEERKVYETEHFLALVPFYARFPYEVHIYPKRHVSTLLEFSKEEKKEFAKVLKVVTAKYDKLFDQEFPYMMMFFQAPFNEEDVSHFFHFHVEFNPPKRDRDKLKWMASVETGTWAFINPVVPEEAARQLRETEVEI</sequence>
<reference key="1">
    <citation type="journal article" date="1998" name="Syst. Appl. Microbiol.">
        <title>Properties of an alpha-galactosidase, and structure of its gene galA, within an alpha- and beta-galactoside utilization gene cluster of the hyperthermophilic bacterium Thermotoga maritima.</title>
        <authorList>
            <person name="Liebl W."/>
            <person name="Wagner B."/>
            <person name="Schellhase J."/>
        </authorList>
    </citation>
    <scope>NUCLEOTIDE SEQUENCE [GENOMIC DNA]</scope>
    <source>
        <strain>ATCC 43589 / DSM 3109 / JCM 10099 / NBRC 100826 / MSB8</strain>
    </source>
</reference>
<reference key="2">
    <citation type="journal article" date="1999" name="Nature">
        <title>Evidence for lateral gene transfer between Archaea and Bacteria from genome sequence of Thermotoga maritima.</title>
        <authorList>
            <person name="Nelson K.E."/>
            <person name="Clayton R.A."/>
            <person name="Gill S.R."/>
            <person name="Gwinn M.L."/>
            <person name="Dodson R.J."/>
            <person name="Haft D.H."/>
            <person name="Hickey E.K."/>
            <person name="Peterson J.D."/>
            <person name="Nelson W.C."/>
            <person name="Ketchum K.A."/>
            <person name="McDonald L.A."/>
            <person name="Utterback T.R."/>
            <person name="Malek J.A."/>
            <person name="Linher K.D."/>
            <person name="Garrett M.M."/>
            <person name="Stewart A.M."/>
            <person name="Cotton M.D."/>
            <person name="Pratt M.S."/>
            <person name="Phillips C.A."/>
            <person name="Richardson D.L."/>
            <person name="Heidelberg J.F."/>
            <person name="Sutton G.G."/>
            <person name="Fleischmann R.D."/>
            <person name="Eisen J.A."/>
            <person name="White O."/>
            <person name="Salzberg S.L."/>
            <person name="Smith H.O."/>
            <person name="Venter J.C."/>
            <person name="Fraser C.M."/>
        </authorList>
    </citation>
    <scope>NUCLEOTIDE SEQUENCE [LARGE SCALE GENOMIC DNA]</scope>
    <source>
        <strain>ATCC 43589 / DSM 3109 / JCM 10099 / NBRC 100826 / MSB8</strain>
    </source>
</reference>
<feature type="chain" id="PRO_0000169898" description="Galactose-1-phosphate uridylyltransferase">
    <location>
        <begin position="1"/>
        <end position="318"/>
    </location>
</feature>
<feature type="active site" description="Tele-UMP-histidine intermediate" evidence="2">
    <location>
        <position position="143"/>
    </location>
</feature>
<feature type="binding site" evidence="2">
    <location>
        <position position="32"/>
    </location>
    <ligand>
        <name>Zn(2+)</name>
        <dbReference type="ChEBI" id="CHEBI:29105"/>
    </ligand>
</feature>
<feature type="binding site" evidence="2">
    <location>
        <position position="35"/>
    </location>
    <ligand>
        <name>Zn(2+)</name>
        <dbReference type="ChEBI" id="CHEBI:29105"/>
    </ligand>
</feature>
<feature type="binding site" evidence="2">
    <location>
        <position position="90"/>
    </location>
    <ligand>
        <name>Zn(2+)</name>
        <dbReference type="ChEBI" id="CHEBI:29105"/>
    </ligand>
</feature>
<feature type="binding site" evidence="1">
    <location>
        <position position="130"/>
    </location>
    <ligand>
        <name>UDP-alpha-D-glucose</name>
        <dbReference type="ChEBI" id="CHEBI:58885"/>
    </ligand>
</feature>
<feature type="binding site" evidence="2">
    <location>
        <position position="141"/>
    </location>
    <ligand>
        <name>Zn(2+)</name>
        <dbReference type="ChEBI" id="CHEBI:29105"/>
    </ligand>
</feature>
<feature type="binding site" evidence="1">
    <location>
        <position position="145"/>
    </location>
    <ligand>
        <name>UDP-alpha-D-glucose</name>
        <dbReference type="ChEBI" id="CHEBI:58885"/>
    </ligand>
</feature>
<organism>
    <name type="scientific">Thermotoga maritima (strain ATCC 43589 / DSM 3109 / JCM 10099 / NBRC 100826 / MSB8)</name>
    <dbReference type="NCBI Taxonomy" id="243274"/>
    <lineage>
        <taxon>Bacteria</taxon>
        <taxon>Thermotogati</taxon>
        <taxon>Thermotogota</taxon>
        <taxon>Thermotogae</taxon>
        <taxon>Thermotogales</taxon>
        <taxon>Thermotogaceae</taxon>
        <taxon>Thermotoga</taxon>
    </lineage>
</organism>
<comment type="catalytic activity">
    <reaction>
        <text>alpha-D-galactose 1-phosphate + UDP-alpha-D-glucose = alpha-D-glucose 1-phosphate + UDP-alpha-D-galactose</text>
        <dbReference type="Rhea" id="RHEA:13989"/>
        <dbReference type="ChEBI" id="CHEBI:58336"/>
        <dbReference type="ChEBI" id="CHEBI:58601"/>
        <dbReference type="ChEBI" id="CHEBI:58885"/>
        <dbReference type="ChEBI" id="CHEBI:66914"/>
        <dbReference type="EC" id="2.7.7.12"/>
    </reaction>
</comment>
<comment type="cofactor">
    <cofactor evidence="1">
        <name>Zn(2+)</name>
        <dbReference type="ChEBI" id="CHEBI:29105"/>
    </cofactor>
    <text evidence="1">Binds 1 zinc ion per subunit.</text>
</comment>
<comment type="pathway">
    <text>Carbohydrate metabolism; galactose metabolism.</text>
</comment>
<comment type="similarity">
    <text evidence="3">Belongs to the galactose-1-phosphate uridylyltransferase type 1 family.</text>
</comment>
<gene>
    <name type="primary">galT</name>
    <name type="ordered locus">TM_1191</name>
</gene>
<keyword id="KW-0119">Carbohydrate metabolism</keyword>
<keyword id="KW-0299">Galactose metabolism</keyword>
<keyword id="KW-0408">Iron</keyword>
<keyword id="KW-0479">Metal-binding</keyword>
<keyword id="KW-0548">Nucleotidyltransferase</keyword>
<keyword id="KW-1185">Reference proteome</keyword>
<keyword id="KW-0808">Transferase</keyword>
<keyword id="KW-0862">Zinc</keyword>
<proteinExistence type="inferred from homology"/>
<evidence type="ECO:0000250" key="1">
    <source>
        <dbReference type="UniProtKB" id="P09148"/>
    </source>
</evidence>
<evidence type="ECO:0000255" key="2">
    <source>
        <dbReference type="PROSITE-ProRule" id="PRU10033"/>
    </source>
</evidence>
<evidence type="ECO:0000305" key="3"/>